<sequence>MIELKSGLLVSKIRNGTVIDHIPAGRALAVLKILGIKGIEGYRIALVMNAESSKMGRKDILKIEDREIEEKEAELITLIAPEATINIIKDYEVVGKRKQEIPQEVVGLLRCTNPSCITNNDVEAITRFRTLKRRPLQLACEYCETRLTEDEVVRQILG</sequence>
<accession>A4YI51</accession>
<dbReference type="EMBL" id="CP000682">
    <property type="protein sequence ID" value="ABP96103.1"/>
    <property type="molecule type" value="Genomic_DNA"/>
</dbReference>
<dbReference type="RefSeq" id="WP_012021890.1">
    <property type="nucleotide sequence ID" value="NZ_CP139956.1"/>
</dbReference>
<dbReference type="SMR" id="A4YI51"/>
<dbReference type="STRING" id="399549.Msed_1963"/>
<dbReference type="GeneID" id="97612930"/>
<dbReference type="KEGG" id="mse:Msed_1963"/>
<dbReference type="eggNOG" id="arCOG04229">
    <property type="taxonomic scope" value="Archaea"/>
</dbReference>
<dbReference type="HOGENOM" id="CLU_128576_0_0_2"/>
<dbReference type="Proteomes" id="UP000000242">
    <property type="component" value="Chromosome"/>
</dbReference>
<dbReference type="GO" id="GO:0009347">
    <property type="term" value="C:aspartate carbamoyltransferase complex"/>
    <property type="evidence" value="ECO:0007669"/>
    <property type="project" value="InterPro"/>
</dbReference>
<dbReference type="GO" id="GO:0046872">
    <property type="term" value="F:metal ion binding"/>
    <property type="evidence" value="ECO:0007669"/>
    <property type="project" value="UniProtKB-KW"/>
</dbReference>
<dbReference type="GO" id="GO:0006207">
    <property type="term" value="P:'de novo' pyrimidine nucleobase biosynthetic process"/>
    <property type="evidence" value="ECO:0007669"/>
    <property type="project" value="InterPro"/>
</dbReference>
<dbReference type="GO" id="GO:0006221">
    <property type="term" value="P:pyrimidine nucleotide biosynthetic process"/>
    <property type="evidence" value="ECO:0007669"/>
    <property type="project" value="UniProtKB-UniRule"/>
</dbReference>
<dbReference type="Gene3D" id="2.30.30.20">
    <property type="entry name" value="Aspartate carbamoyltransferase regulatory subunit, C-terminal domain"/>
    <property type="match status" value="1"/>
</dbReference>
<dbReference type="Gene3D" id="3.30.70.140">
    <property type="entry name" value="Aspartate carbamoyltransferase regulatory subunit, N-terminal domain"/>
    <property type="match status" value="1"/>
</dbReference>
<dbReference type="HAMAP" id="MF_00002">
    <property type="entry name" value="Asp_carb_tr_reg"/>
    <property type="match status" value="1"/>
</dbReference>
<dbReference type="InterPro" id="IPR020545">
    <property type="entry name" value="Asp_carbamoyltransf_reg_N"/>
</dbReference>
<dbReference type="InterPro" id="IPR002801">
    <property type="entry name" value="Asp_carbamoylTrfase_reg"/>
</dbReference>
<dbReference type="InterPro" id="IPR020542">
    <property type="entry name" value="Asp_carbamoyltrfase_reg_C"/>
</dbReference>
<dbReference type="InterPro" id="IPR036792">
    <property type="entry name" value="Asp_carbatrfase_reg_C_sf"/>
</dbReference>
<dbReference type="InterPro" id="IPR036793">
    <property type="entry name" value="Asp_carbatrfase_reg_N_sf"/>
</dbReference>
<dbReference type="NCBIfam" id="TIGR00240">
    <property type="entry name" value="ATCase_reg"/>
    <property type="match status" value="1"/>
</dbReference>
<dbReference type="PANTHER" id="PTHR35805">
    <property type="entry name" value="ASPARTATE CARBAMOYLTRANSFERASE REGULATORY CHAIN"/>
    <property type="match status" value="1"/>
</dbReference>
<dbReference type="PANTHER" id="PTHR35805:SF1">
    <property type="entry name" value="ASPARTATE CARBAMOYLTRANSFERASE REGULATORY CHAIN"/>
    <property type="match status" value="1"/>
</dbReference>
<dbReference type="Pfam" id="PF01948">
    <property type="entry name" value="PyrI"/>
    <property type="match status" value="1"/>
</dbReference>
<dbReference type="Pfam" id="PF02748">
    <property type="entry name" value="PyrI_C"/>
    <property type="match status" value="1"/>
</dbReference>
<dbReference type="SUPFAM" id="SSF57825">
    <property type="entry name" value="Aspartate carbamoyltransferase, Regulatory-chain, C-terminal domain"/>
    <property type="match status" value="1"/>
</dbReference>
<dbReference type="SUPFAM" id="SSF54893">
    <property type="entry name" value="Aspartate carbamoyltransferase, Regulatory-chain, N-terminal domain"/>
    <property type="match status" value="1"/>
</dbReference>
<protein>
    <recommendedName>
        <fullName evidence="1">Aspartate carbamoyltransferase regulatory chain</fullName>
    </recommendedName>
</protein>
<feature type="chain" id="PRO_0000321501" description="Aspartate carbamoyltransferase regulatory chain">
    <location>
        <begin position="1"/>
        <end position="158"/>
    </location>
</feature>
<feature type="binding site" evidence="1">
    <location>
        <position position="111"/>
    </location>
    <ligand>
        <name>Zn(2+)</name>
        <dbReference type="ChEBI" id="CHEBI:29105"/>
    </ligand>
</feature>
<feature type="binding site" evidence="1">
    <location>
        <position position="116"/>
    </location>
    <ligand>
        <name>Zn(2+)</name>
        <dbReference type="ChEBI" id="CHEBI:29105"/>
    </ligand>
</feature>
<feature type="binding site" evidence="1">
    <location>
        <position position="140"/>
    </location>
    <ligand>
        <name>Zn(2+)</name>
        <dbReference type="ChEBI" id="CHEBI:29105"/>
    </ligand>
</feature>
<feature type="binding site" evidence="1">
    <location>
        <position position="143"/>
    </location>
    <ligand>
        <name>Zn(2+)</name>
        <dbReference type="ChEBI" id="CHEBI:29105"/>
    </ligand>
</feature>
<reference key="1">
    <citation type="journal article" date="2008" name="Appl. Environ. Microbiol.">
        <title>The genome sequence of the metal-mobilizing, extremely thermoacidophilic archaeon Metallosphaera sedula provides insights into bioleaching-associated metabolism.</title>
        <authorList>
            <person name="Auernik K.S."/>
            <person name="Maezato Y."/>
            <person name="Blum P.H."/>
            <person name="Kelly R.M."/>
        </authorList>
    </citation>
    <scope>NUCLEOTIDE SEQUENCE [LARGE SCALE GENOMIC DNA]</scope>
    <source>
        <strain>ATCC 51363 / DSM 5348 / JCM 9185 / NBRC 15509 / TH2</strain>
    </source>
</reference>
<proteinExistence type="inferred from homology"/>
<comment type="function">
    <text evidence="1">Involved in allosteric regulation of aspartate carbamoyltransferase.</text>
</comment>
<comment type="cofactor">
    <cofactor evidence="1">
        <name>Zn(2+)</name>
        <dbReference type="ChEBI" id="CHEBI:29105"/>
    </cofactor>
    <text evidence="1">Binds 1 zinc ion per subunit.</text>
</comment>
<comment type="subunit">
    <text evidence="1">Contains catalytic and regulatory chains.</text>
</comment>
<comment type="similarity">
    <text evidence="1">Belongs to the PyrI family.</text>
</comment>
<name>PYRI_METS5</name>
<evidence type="ECO:0000255" key="1">
    <source>
        <dbReference type="HAMAP-Rule" id="MF_00002"/>
    </source>
</evidence>
<keyword id="KW-0479">Metal-binding</keyword>
<keyword id="KW-0665">Pyrimidine biosynthesis</keyword>
<keyword id="KW-1185">Reference proteome</keyword>
<keyword id="KW-0862">Zinc</keyword>
<organism>
    <name type="scientific">Metallosphaera sedula (strain ATCC 51363 / DSM 5348 / JCM 9185 / NBRC 15509 / TH2)</name>
    <dbReference type="NCBI Taxonomy" id="399549"/>
    <lineage>
        <taxon>Archaea</taxon>
        <taxon>Thermoproteota</taxon>
        <taxon>Thermoprotei</taxon>
        <taxon>Sulfolobales</taxon>
        <taxon>Sulfolobaceae</taxon>
        <taxon>Metallosphaera</taxon>
    </lineage>
</organism>
<gene>
    <name evidence="1" type="primary">pyrI</name>
    <name type="ordered locus">Msed_1963</name>
</gene>